<reference key="1">
    <citation type="journal article" date="2007" name="DNA Res.">
        <title>Complete genomic structure of the bloom-forming toxic cyanobacterium Microcystis aeruginosa NIES-843.</title>
        <authorList>
            <person name="Kaneko T."/>
            <person name="Nakajima N."/>
            <person name="Okamoto S."/>
            <person name="Suzuki I."/>
            <person name="Tanabe Y."/>
            <person name="Tamaoki M."/>
            <person name="Nakamura Y."/>
            <person name="Kasai F."/>
            <person name="Watanabe A."/>
            <person name="Kawashima K."/>
            <person name="Kishida Y."/>
            <person name="Ono A."/>
            <person name="Shimizu Y."/>
            <person name="Takahashi C."/>
            <person name="Minami C."/>
            <person name="Fujishiro T."/>
            <person name="Kohara M."/>
            <person name="Katoh M."/>
            <person name="Nakazaki N."/>
            <person name="Nakayama S."/>
            <person name="Yamada M."/>
            <person name="Tabata S."/>
            <person name="Watanabe M.M."/>
        </authorList>
    </citation>
    <scope>NUCLEOTIDE SEQUENCE [LARGE SCALE GENOMIC DNA]</scope>
    <source>
        <strain>NIES-843 / IAM M-247</strain>
    </source>
</reference>
<keyword id="KW-0963">Cytoplasm</keyword>
<keyword id="KW-0456">Lyase</keyword>
<keyword id="KW-0704">Schiff base</keyword>
<organism>
    <name type="scientific">Microcystis aeruginosa (strain NIES-843 / IAM M-2473)</name>
    <dbReference type="NCBI Taxonomy" id="449447"/>
    <lineage>
        <taxon>Bacteria</taxon>
        <taxon>Bacillati</taxon>
        <taxon>Cyanobacteriota</taxon>
        <taxon>Cyanophyceae</taxon>
        <taxon>Oscillatoriophycideae</taxon>
        <taxon>Chroococcales</taxon>
        <taxon>Microcystaceae</taxon>
        <taxon>Microcystis</taxon>
    </lineage>
</organism>
<feature type="chain" id="PRO_1000094850" description="Deoxyribose-phosphate aldolase">
    <location>
        <begin position="1"/>
        <end position="225"/>
    </location>
</feature>
<feature type="active site" description="Proton donor/acceptor" evidence="1">
    <location>
        <position position="96"/>
    </location>
</feature>
<feature type="active site" description="Schiff-base intermediate with acetaldehyde" evidence="1">
    <location>
        <position position="157"/>
    </location>
</feature>
<feature type="active site" description="Proton donor/acceptor" evidence="1">
    <location>
        <position position="185"/>
    </location>
</feature>
<accession>B0JK91</accession>
<evidence type="ECO:0000255" key="1">
    <source>
        <dbReference type="HAMAP-Rule" id="MF_00114"/>
    </source>
</evidence>
<protein>
    <recommendedName>
        <fullName evidence="1">Deoxyribose-phosphate aldolase</fullName>
        <shortName evidence="1">DERA</shortName>
        <ecNumber evidence="1">4.1.2.4</ecNumber>
    </recommendedName>
    <alternativeName>
        <fullName evidence="1">2-deoxy-D-ribose 5-phosphate aldolase</fullName>
    </alternativeName>
    <alternativeName>
        <fullName evidence="1">Phosphodeoxyriboaldolase</fullName>
        <shortName evidence="1">Deoxyriboaldolase</shortName>
    </alternativeName>
</protein>
<proteinExistence type="inferred from homology"/>
<name>DEOC_MICAN</name>
<sequence length="225" mass="24246">MAITDSDLDLAQYIDHSLLIPTATSEQLEAYCQQAEQYRFPTVCVYPAAVKQAVQLLHGKKTLVSTVIGFPAGATTSAVKRYEALEAVDNGAKELDVVINLGWLKDGKSEQLFQEIASICQETGQTVKAILETSQLTDTEKRLAAEICMDAGVSYLKTSTGWFGGATVSDVKFLKEISKGRVGIKASGGIRTLEQAIALIRAGATRLGTSRGVDLVRQQKAAFEE</sequence>
<comment type="function">
    <text evidence="1">Catalyzes a reversible aldol reaction between acetaldehyde and D-glyceraldehyde 3-phosphate to generate 2-deoxy-D-ribose 5-phosphate.</text>
</comment>
<comment type="catalytic activity">
    <reaction evidence="1">
        <text>2-deoxy-D-ribose 5-phosphate = D-glyceraldehyde 3-phosphate + acetaldehyde</text>
        <dbReference type="Rhea" id="RHEA:12821"/>
        <dbReference type="ChEBI" id="CHEBI:15343"/>
        <dbReference type="ChEBI" id="CHEBI:59776"/>
        <dbReference type="ChEBI" id="CHEBI:62877"/>
        <dbReference type="EC" id="4.1.2.4"/>
    </reaction>
</comment>
<comment type="pathway">
    <text evidence="1">Carbohydrate degradation; 2-deoxy-D-ribose 1-phosphate degradation; D-glyceraldehyde 3-phosphate and acetaldehyde from 2-deoxy-alpha-D-ribose 1-phosphate: step 2/2.</text>
</comment>
<comment type="subcellular location">
    <subcellularLocation>
        <location evidence="1">Cytoplasm</location>
    </subcellularLocation>
</comment>
<comment type="similarity">
    <text evidence="1">Belongs to the DeoC/FbaB aldolase family. DeoC type 1 subfamily.</text>
</comment>
<gene>
    <name evidence="1" type="primary">deoC</name>
    <name type="ordered locus">MAE_61230</name>
</gene>
<dbReference type="EC" id="4.1.2.4" evidence="1"/>
<dbReference type="EMBL" id="AP009552">
    <property type="protein sequence ID" value="BAG05945.1"/>
    <property type="molecule type" value="Genomic_DNA"/>
</dbReference>
<dbReference type="RefSeq" id="WP_002797255.1">
    <property type="nucleotide sequence ID" value="NC_010296.1"/>
</dbReference>
<dbReference type="SMR" id="B0JK91"/>
<dbReference type="STRING" id="449447.MAE_61230"/>
<dbReference type="PaxDb" id="449447-MAE_61230"/>
<dbReference type="EnsemblBacteria" id="BAG05945">
    <property type="protein sequence ID" value="BAG05945"/>
    <property type="gene ID" value="MAE_61230"/>
</dbReference>
<dbReference type="KEGG" id="mar:MAE_61230"/>
<dbReference type="eggNOG" id="COG0274">
    <property type="taxonomic scope" value="Bacteria"/>
</dbReference>
<dbReference type="HOGENOM" id="CLU_053595_0_1_3"/>
<dbReference type="BioCyc" id="MAER449447:MAE_RS26730-MONOMER"/>
<dbReference type="UniPathway" id="UPA00002">
    <property type="reaction ID" value="UER00468"/>
</dbReference>
<dbReference type="Proteomes" id="UP000001510">
    <property type="component" value="Chromosome"/>
</dbReference>
<dbReference type="GO" id="GO:0005737">
    <property type="term" value="C:cytoplasm"/>
    <property type="evidence" value="ECO:0007669"/>
    <property type="project" value="UniProtKB-SubCell"/>
</dbReference>
<dbReference type="GO" id="GO:0004139">
    <property type="term" value="F:deoxyribose-phosphate aldolase activity"/>
    <property type="evidence" value="ECO:0007669"/>
    <property type="project" value="UniProtKB-UniRule"/>
</dbReference>
<dbReference type="GO" id="GO:0006018">
    <property type="term" value="P:2-deoxyribose 1-phosphate catabolic process"/>
    <property type="evidence" value="ECO:0007669"/>
    <property type="project" value="UniProtKB-UniRule"/>
</dbReference>
<dbReference type="GO" id="GO:0016052">
    <property type="term" value="P:carbohydrate catabolic process"/>
    <property type="evidence" value="ECO:0007669"/>
    <property type="project" value="TreeGrafter"/>
</dbReference>
<dbReference type="GO" id="GO:0009264">
    <property type="term" value="P:deoxyribonucleotide catabolic process"/>
    <property type="evidence" value="ECO:0007669"/>
    <property type="project" value="InterPro"/>
</dbReference>
<dbReference type="CDD" id="cd00959">
    <property type="entry name" value="DeoC"/>
    <property type="match status" value="1"/>
</dbReference>
<dbReference type="FunFam" id="3.20.20.70:FF:000044">
    <property type="entry name" value="Deoxyribose-phosphate aldolase"/>
    <property type="match status" value="1"/>
</dbReference>
<dbReference type="Gene3D" id="3.20.20.70">
    <property type="entry name" value="Aldolase class I"/>
    <property type="match status" value="1"/>
</dbReference>
<dbReference type="HAMAP" id="MF_00114">
    <property type="entry name" value="DeoC_type1"/>
    <property type="match status" value="1"/>
</dbReference>
<dbReference type="InterPro" id="IPR013785">
    <property type="entry name" value="Aldolase_TIM"/>
</dbReference>
<dbReference type="InterPro" id="IPR011343">
    <property type="entry name" value="DeoC"/>
</dbReference>
<dbReference type="InterPro" id="IPR002915">
    <property type="entry name" value="DeoC/FbaB/LacD_aldolase"/>
</dbReference>
<dbReference type="InterPro" id="IPR028581">
    <property type="entry name" value="DeoC_typeI"/>
</dbReference>
<dbReference type="NCBIfam" id="TIGR00126">
    <property type="entry name" value="deoC"/>
    <property type="match status" value="1"/>
</dbReference>
<dbReference type="PANTHER" id="PTHR10889">
    <property type="entry name" value="DEOXYRIBOSE-PHOSPHATE ALDOLASE"/>
    <property type="match status" value="1"/>
</dbReference>
<dbReference type="PANTHER" id="PTHR10889:SF1">
    <property type="entry name" value="DEOXYRIBOSE-PHOSPHATE ALDOLASE"/>
    <property type="match status" value="1"/>
</dbReference>
<dbReference type="Pfam" id="PF01791">
    <property type="entry name" value="DeoC"/>
    <property type="match status" value="1"/>
</dbReference>
<dbReference type="PIRSF" id="PIRSF001357">
    <property type="entry name" value="DeoC"/>
    <property type="match status" value="1"/>
</dbReference>
<dbReference type="SMART" id="SM01133">
    <property type="entry name" value="DeoC"/>
    <property type="match status" value="1"/>
</dbReference>
<dbReference type="SUPFAM" id="SSF51569">
    <property type="entry name" value="Aldolase"/>
    <property type="match status" value="1"/>
</dbReference>